<sequence>MSWWWARSLGAQKEFKENGALTSYQSVGLIIGVTGIVGNSLAEILPLPDTPGGPWKVYGVARRPRPAWNTDHPIEYIQCDVASTEDTLAKLSPLTNITHIFYVAWTGSEDCEVNETMFHNVLKAVIPNAPNLRHICIQTGIKHYTGPLDPDGGIQPHDSPFTEDLPRLNAPNFYHNLEDILIEEAAKKKGLTWSVHRPALVFGFSPYSMMNIIGALSVYAVICKHENKPLIYHGAPDNSRDSWNVYADAADADLIAEHQIWAAVDSNAKNEVFNCSNGDVFKWKQMWKILAEQFEVELVGYEDGQKRMSLQERMKGKGPVWDEIVRKHKLLPTKLEDVAQWWFADIVSQSQNLVNGVNKSKENGFLGFRDSKKSFVYWIKKMRAAKIIP</sequence>
<comment type="function">
    <text evidence="1 2">Iridoid synthase that catalyzes the first step in generation of the iridoid ring scaffold using the linear monoterpene (6E)-8-oxogeranial as substrate. Iridoids comprise a large family of distinctive bicyclic monoterpenes that possess a wide range of pharmacological activities, including anticancer, anti-inflammatory, antifungal and antibacterial activities.</text>
</comment>
<comment type="catalytic activity">
    <reaction evidence="1 2">
        <text>(S)-8-oxocitronellyl enol + NADP(+) = (6E)-8-oxogeranial + NADPH + H(+)</text>
        <dbReference type="Rhea" id="RHEA:62592"/>
        <dbReference type="ChEBI" id="CHEBI:15378"/>
        <dbReference type="ChEBI" id="CHEBI:57783"/>
        <dbReference type="ChEBI" id="CHEBI:58349"/>
        <dbReference type="ChEBI" id="CHEBI:64239"/>
        <dbReference type="ChEBI" id="CHEBI:144481"/>
        <dbReference type="EC" id="1.3.1.122"/>
    </reaction>
    <physiologicalReaction direction="right-to-left" evidence="2">
        <dbReference type="Rhea" id="RHEA:62594"/>
    </physiologicalReaction>
</comment>
<comment type="catalytic activity">
    <reaction evidence="1 2">
        <text>(S)-8-oxocitronellyl enol + NAD(+) = (6E)-8-oxogeranial + NADH + H(+)</text>
        <dbReference type="Rhea" id="RHEA:62596"/>
        <dbReference type="ChEBI" id="CHEBI:15378"/>
        <dbReference type="ChEBI" id="CHEBI:57540"/>
        <dbReference type="ChEBI" id="CHEBI:57945"/>
        <dbReference type="ChEBI" id="CHEBI:64239"/>
        <dbReference type="ChEBI" id="CHEBI:144481"/>
        <dbReference type="EC" id="1.3.1.122"/>
    </reaction>
    <physiologicalReaction direction="right-to-left" evidence="2">
        <dbReference type="Rhea" id="RHEA:62598"/>
    </physiologicalReaction>
</comment>
<comment type="similarity">
    <text evidence="4">Belongs to the short-chain dehydrogenases/reductases (SDR) family. Highly divergent.</text>
</comment>
<comment type="caution">
    <text evidence="1">Was originally thought to catalyze the entire reaction from (6E)-8-oxogeranial to nepetalactol including a cyclase step, but new results have shown that the cyclase is a different enzyme and this enzyme exclusively catalyzes a reduction step.</text>
</comment>
<proteinExistence type="evidence at protein level"/>
<dbReference type="EC" id="1.3.1.122" evidence="2"/>
<dbReference type="EMBL" id="KU842378">
    <property type="protein sequence ID" value="AON76722.1"/>
    <property type="molecule type" value="mRNA"/>
</dbReference>
<dbReference type="SMR" id="A0A1C9CX56"/>
<dbReference type="GO" id="GO:0016627">
    <property type="term" value="F:oxidoreductase activity, acting on the CH-CH group of donors"/>
    <property type="evidence" value="ECO:0000314"/>
    <property type="project" value="UniProtKB"/>
</dbReference>
<dbReference type="GO" id="GO:0043693">
    <property type="term" value="P:monoterpene biosynthetic process"/>
    <property type="evidence" value="ECO:0000314"/>
    <property type="project" value="UniProtKB"/>
</dbReference>
<dbReference type="CDD" id="cd08948">
    <property type="entry name" value="5beta-POR_like_SDR_a"/>
    <property type="match status" value="1"/>
</dbReference>
<dbReference type="FunFam" id="3.40.50.720:FF:000808">
    <property type="entry name" value="Iridoid synthase"/>
    <property type="match status" value="1"/>
</dbReference>
<dbReference type="Gene3D" id="3.40.50.720">
    <property type="entry name" value="NAD(P)-binding Rossmann-like Domain"/>
    <property type="match status" value="1"/>
</dbReference>
<dbReference type="InterPro" id="IPR036291">
    <property type="entry name" value="NAD(P)-bd_dom_sf"/>
</dbReference>
<dbReference type="InterPro" id="IPR055222">
    <property type="entry name" value="PRISE-like_Rossmann-fold"/>
</dbReference>
<dbReference type="PANTHER" id="PTHR32487">
    <property type="entry name" value="3-OXO-DELTA(4,5)-STEROID 5-BETA-REDUCTASE"/>
    <property type="match status" value="1"/>
</dbReference>
<dbReference type="PANTHER" id="PTHR32487:SF0">
    <property type="entry name" value="3-OXO-DELTA(4,5)-STEROID 5-BETA-REDUCTASE"/>
    <property type="match status" value="1"/>
</dbReference>
<dbReference type="Pfam" id="PF22917">
    <property type="entry name" value="PRISE"/>
    <property type="match status" value="1"/>
</dbReference>
<dbReference type="SUPFAM" id="SSF51735">
    <property type="entry name" value="NAD(P)-binding Rossmann-fold domains"/>
    <property type="match status" value="1"/>
</dbReference>
<organism>
    <name type="scientific">Camptotheca acuminata</name>
    <name type="common">Happy tree</name>
    <dbReference type="NCBI Taxonomy" id="16922"/>
    <lineage>
        <taxon>Eukaryota</taxon>
        <taxon>Viridiplantae</taxon>
        <taxon>Streptophyta</taxon>
        <taxon>Embryophyta</taxon>
        <taxon>Tracheophyta</taxon>
        <taxon>Spermatophyta</taxon>
        <taxon>Magnoliopsida</taxon>
        <taxon>eudicotyledons</taxon>
        <taxon>Gunneridae</taxon>
        <taxon>Pentapetalae</taxon>
        <taxon>asterids</taxon>
        <taxon>Cornales</taxon>
        <taxon>Nyssaceae</taxon>
        <taxon>Camptotheca</taxon>
    </lineage>
</organism>
<feature type="chain" id="PRO_0000444193" description="(S)-8-oxocitronellyl enol synthase CYC1">
    <location>
        <begin position="1"/>
        <end position="389"/>
    </location>
</feature>
<feature type="active site" evidence="1">
    <location>
        <position position="142"/>
    </location>
</feature>
<feature type="active site" evidence="1">
    <location>
        <position position="174"/>
    </location>
</feature>
<feature type="binding site" evidence="1">
    <location>
        <begin position="34"/>
        <end position="36"/>
    </location>
    <ligand>
        <name>NADP(+)</name>
        <dbReference type="ChEBI" id="CHEBI:58349"/>
    </ligand>
</feature>
<feature type="binding site" evidence="1">
    <location>
        <begin position="62"/>
        <end position="63"/>
    </location>
    <ligand>
        <name>NADP(+)</name>
        <dbReference type="ChEBI" id="CHEBI:58349"/>
    </ligand>
</feature>
<feature type="binding site" evidence="1">
    <location>
        <begin position="80"/>
        <end position="81"/>
    </location>
    <ligand>
        <name>NADP(+)</name>
        <dbReference type="ChEBI" id="CHEBI:58349"/>
    </ligand>
</feature>
<feature type="binding site" evidence="1">
    <location>
        <begin position="104"/>
        <end position="105"/>
    </location>
    <ligand>
        <name>NADP(+)</name>
        <dbReference type="ChEBI" id="CHEBI:58349"/>
    </ligand>
</feature>
<feature type="binding site" evidence="1">
    <location>
        <position position="138"/>
    </location>
    <ligand>
        <name>NADP(+)</name>
        <dbReference type="ChEBI" id="CHEBI:58349"/>
    </ligand>
</feature>
<feature type="binding site" evidence="1">
    <location>
        <position position="142"/>
    </location>
    <ligand>
        <name>substrate</name>
    </ligand>
</feature>
<feature type="binding site" evidence="1">
    <location>
        <position position="174"/>
    </location>
    <ligand>
        <name>NADP(+)</name>
        <dbReference type="ChEBI" id="CHEBI:58349"/>
    </ligand>
</feature>
<feature type="binding site" evidence="1">
    <location>
        <position position="174"/>
    </location>
    <ligand>
        <name>substrate</name>
    </ligand>
</feature>
<feature type="binding site" evidence="1">
    <location>
        <position position="201"/>
    </location>
    <ligand>
        <name>NADP(+)</name>
        <dbReference type="ChEBI" id="CHEBI:58349"/>
    </ligand>
</feature>
<feature type="binding site" evidence="1">
    <location>
        <begin position="208"/>
        <end position="210"/>
    </location>
    <ligand>
        <name>NADP(+)</name>
        <dbReference type="ChEBI" id="CHEBI:58349"/>
    </ligand>
</feature>
<feature type="binding site" evidence="1">
    <location>
        <position position="350"/>
    </location>
    <ligand>
        <name>substrate</name>
    </ligand>
</feature>
<gene>
    <name evidence="3" type="primary">CYC1</name>
</gene>
<name>CYC1_CAMAC</name>
<evidence type="ECO:0000250" key="1">
    <source>
        <dbReference type="UniProtKB" id="K7WDL7"/>
    </source>
</evidence>
<evidence type="ECO:0000269" key="2">
    <source>
    </source>
</evidence>
<evidence type="ECO:0000303" key="3">
    <source>
    </source>
</evidence>
<evidence type="ECO:0000305" key="4"/>
<protein>
    <recommendedName>
        <fullName evidence="4">(S)-8-oxocitronellyl enol synthase CYC1</fullName>
        <ecNumber evidence="2">1.3.1.122</ecNumber>
    </recommendedName>
    <alternativeName>
        <fullName evidence="3">Cyclase 1</fullName>
    </alternativeName>
    <alternativeName>
        <fullName evidence="4">Iridoid synthase</fullName>
        <shortName evidence="4">ISY</shortName>
    </alternativeName>
</protein>
<reference key="1">
    <citation type="journal article" date="2016" name="Plant Cell">
        <title>Metabolite diversity in alkaloid biosynthesis: a multilane (diastereomer) highway for camptothecin synthesis in Camptotheca acuminata.</title>
        <authorList>
            <person name="Sadre R."/>
            <person name="Magallanes-Lundback M."/>
            <person name="Pradhan S."/>
            <person name="Salim V."/>
            <person name="Mesberg A."/>
            <person name="Jones A.D."/>
            <person name="DellaPenna D."/>
        </authorList>
    </citation>
    <scope>NUCLEOTIDE SEQUENCE [MRNA]</scope>
    <scope>FUNCTION</scope>
    <scope>CATALYTIC ACTIVITY</scope>
</reference>
<accession>A0A1C9CX56</accession>
<keyword id="KW-0521">NADP</keyword>
<keyword id="KW-0560">Oxidoreductase</keyword>